<feature type="chain" id="PRO_0000126821" description="Phenylalanine--tRNA ligase alpha subunit">
    <location>
        <begin position="1"/>
        <end position="469"/>
    </location>
</feature>
<feature type="binding site" evidence="1">
    <location>
        <position position="309"/>
    </location>
    <ligand>
        <name>L-phenylalanine</name>
        <dbReference type="ChEBI" id="CHEBI:58095"/>
    </ligand>
</feature>
<feature type="binding site" evidence="1">
    <location>
        <begin position="348"/>
        <end position="350"/>
    </location>
    <ligand>
        <name>L-phenylalanine</name>
        <dbReference type="ChEBI" id="CHEBI:58095"/>
    </ligand>
</feature>
<feature type="binding site" evidence="1">
    <location>
        <position position="388"/>
    </location>
    <ligand>
        <name>L-phenylalanine</name>
        <dbReference type="ChEBI" id="CHEBI:58095"/>
    </ligand>
</feature>
<feature type="binding site" evidence="1">
    <location>
        <position position="390"/>
    </location>
    <ligand>
        <name>Mg(2+)</name>
        <dbReference type="ChEBI" id="CHEBI:18420"/>
        <note>shared with beta subunit</note>
    </ligand>
</feature>
<sequence>MLSENEIKILEYLSKKREASAEDISKQLNIPIESVFSISQLLKEKGYIEVEEKKVIKYELTDEGKRRLKEGFPEEKLVKLLDGKEKKIHELKDKLGRDFEISIGWAKRKGLVKIDGDTVIPLVKDYEAKEEKEALINPEKANKDILQQLLNRKLLIKKEEKILNIRLIREPLEIKPALIFLTPELLASGEWKKYALREYNVEAYPPFYPIGKKHFFKEFLERLRDLMRDLGFKEVYSDYVEIEFYNFDLLFQAQDHPAREIHDSFAISGKGKLTDEKLIQRVKQIHERGWKYNWDVNISMRLMLRSQTTATTARVLASRPKPPIRVFTIGKVFRPDSIDATHLIEFHQLDGLVIEDNFTFRDLLGTLKEIFNGIGIKEIRFKPAYFPFTEPSVEVYGKIEGLGWVEMAGAGLLRPEILEAVEISSSAGAWGLGIDRLAMLLLGLKDIRLLYATDIEYLRNRKVEINADN</sequence>
<accession>Q971D7</accession>
<accession>F9VP54</accession>
<name>SYFA_SULTO</name>
<reference key="1">
    <citation type="journal article" date="2001" name="DNA Res.">
        <title>Complete genome sequence of an aerobic thermoacidophilic Crenarchaeon, Sulfolobus tokodaii strain7.</title>
        <authorList>
            <person name="Kawarabayasi Y."/>
            <person name="Hino Y."/>
            <person name="Horikawa H."/>
            <person name="Jin-no K."/>
            <person name="Takahashi M."/>
            <person name="Sekine M."/>
            <person name="Baba S."/>
            <person name="Ankai A."/>
            <person name="Kosugi H."/>
            <person name="Hosoyama A."/>
            <person name="Fukui S."/>
            <person name="Nagai Y."/>
            <person name="Nishijima K."/>
            <person name="Otsuka R."/>
            <person name="Nakazawa H."/>
            <person name="Takamiya M."/>
            <person name="Kato Y."/>
            <person name="Yoshizawa T."/>
            <person name="Tanaka T."/>
            <person name="Kudoh Y."/>
            <person name="Yamazaki J."/>
            <person name="Kushida N."/>
            <person name="Oguchi A."/>
            <person name="Aoki K."/>
            <person name="Masuda S."/>
            <person name="Yanagii M."/>
            <person name="Nishimura M."/>
            <person name="Yamagishi A."/>
            <person name="Oshima T."/>
            <person name="Kikuchi H."/>
        </authorList>
    </citation>
    <scope>NUCLEOTIDE SEQUENCE [LARGE SCALE GENOMIC DNA]</scope>
    <source>
        <strain>DSM 16993 / JCM 10545 / NBRC 100140 / 7</strain>
    </source>
</reference>
<evidence type="ECO:0000255" key="1">
    <source>
        <dbReference type="HAMAP-Rule" id="MF_00282"/>
    </source>
</evidence>
<keyword id="KW-0030">Aminoacyl-tRNA synthetase</keyword>
<keyword id="KW-0067">ATP-binding</keyword>
<keyword id="KW-0963">Cytoplasm</keyword>
<keyword id="KW-0436">Ligase</keyword>
<keyword id="KW-0460">Magnesium</keyword>
<keyword id="KW-0479">Metal-binding</keyword>
<keyword id="KW-0547">Nucleotide-binding</keyword>
<keyword id="KW-0648">Protein biosynthesis</keyword>
<keyword id="KW-1185">Reference proteome</keyword>
<organism>
    <name type="scientific">Sulfurisphaera tokodaii (strain DSM 16993 / JCM 10545 / NBRC 100140 / 7)</name>
    <name type="common">Sulfolobus tokodaii</name>
    <dbReference type="NCBI Taxonomy" id="273063"/>
    <lineage>
        <taxon>Archaea</taxon>
        <taxon>Thermoproteota</taxon>
        <taxon>Thermoprotei</taxon>
        <taxon>Sulfolobales</taxon>
        <taxon>Sulfolobaceae</taxon>
        <taxon>Sulfurisphaera</taxon>
    </lineage>
</organism>
<proteinExistence type="inferred from homology"/>
<comment type="catalytic activity">
    <reaction evidence="1">
        <text>tRNA(Phe) + L-phenylalanine + ATP = L-phenylalanyl-tRNA(Phe) + AMP + diphosphate + H(+)</text>
        <dbReference type="Rhea" id="RHEA:19413"/>
        <dbReference type="Rhea" id="RHEA-COMP:9668"/>
        <dbReference type="Rhea" id="RHEA-COMP:9699"/>
        <dbReference type="ChEBI" id="CHEBI:15378"/>
        <dbReference type="ChEBI" id="CHEBI:30616"/>
        <dbReference type="ChEBI" id="CHEBI:33019"/>
        <dbReference type="ChEBI" id="CHEBI:58095"/>
        <dbReference type="ChEBI" id="CHEBI:78442"/>
        <dbReference type="ChEBI" id="CHEBI:78531"/>
        <dbReference type="ChEBI" id="CHEBI:456215"/>
        <dbReference type="EC" id="6.1.1.20"/>
    </reaction>
</comment>
<comment type="cofactor">
    <cofactor evidence="1">
        <name>Mg(2+)</name>
        <dbReference type="ChEBI" id="CHEBI:18420"/>
    </cofactor>
    <text evidence="1">Binds 2 magnesium ions per tetramer.</text>
</comment>
<comment type="subunit">
    <text evidence="1">Tetramer of two alpha and two beta subunits.</text>
</comment>
<comment type="subcellular location">
    <subcellularLocation>
        <location evidence="1">Cytoplasm</location>
    </subcellularLocation>
</comment>
<comment type="similarity">
    <text evidence="1">Belongs to the class-II aminoacyl-tRNA synthetase family. Phe-tRNA synthetase alpha subunit type 2 subfamily.</text>
</comment>
<gene>
    <name evidence="1" type="primary">pheS</name>
    <name type="ordered locus">STK_14160</name>
</gene>
<dbReference type="EC" id="6.1.1.20" evidence="1"/>
<dbReference type="EMBL" id="BA000023">
    <property type="protein sequence ID" value="BAK54562.1"/>
    <property type="molecule type" value="Genomic_DNA"/>
</dbReference>
<dbReference type="RefSeq" id="WP_010979461.1">
    <property type="nucleotide sequence ID" value="NC_003106.2"/>
</dbReference>
<dbReference type="SMR" id="Q971D7"/>
<dbReference type="STRING" id="273063.STK_14160"/>
<dbReference type="GeneID" id="1459445"/>
<dbReference type="KEGG" id="sto:STK_14160"/>
<dbReference type="PATRIC" id="fig|273063.9.peg.1616"/>
<dbReference type="eggNOG" id="arCOG00410">
    <property type="taxonomic scope" value="Archaea"/>
</dbReference>
<dbReference type="OrthoDB" id="372178at2157"/>
<dbReference type="Proteomes" id="UP000001015">
    <property type="component" value="Chromosome"/>
</dbReference>
<dbReference type="GO" id="GO:0005737">
    <property type="term" value="C:cytoplasm"/>
    <property type="evidence" value="ECO:0007669"/>
    <property type="project" value="UniProtKB-SubCell"/>
</dbReference>
<dbReference type="GO" id="GO:0005524">
    <property type="term" value="F:ATP binding"/>
    <property type="evidence" value="ECO:0007669"/>
    <property type="project" value="UniProtKB-UniRule"/>
</dbReference>
<dbReference type="GO" id="GO:0000287">
    <property type="term" value="F:magnesium ion binding"/>
    <property type="evidence" value="ECO:0007669"/>
    <property type="project" value="UniProtKB-UniRule"/>
</dbReference>
<dbReference type="GO" id="GO:0004826">
    <property type="term" value="F:phenylalanine-tRNA ligase activity"/>
    <property type="evidence" value="ECO:0007669"/>
    <property type="project" value="UniProtKB-UniRule"/>
</dbReference>
<dbReference type="GO" id="GO:0000049">
    <property type="term" value="F:tRNA binding"/>
    <property type="evidence" value="ECO:0007669"/>
    <property type="project" value="InterPro"/>
</dbReference>
<dbReference type="GO" id="GO:0006432">
    <property type="term" value="P:phenylalanyl-tRNA aminoacylation"/>
    <property type="evidence" value="ECO:0007669"/>
    <property type="project" value="UniProtKB-UniRule"/>
</dbReference>
<dbReference type="CDD" id="cd00496">
    <property type="entry name" value="PheRS_alpha_core"/>
    <property type="match status" value="1"/>
</dbReference>
<dbReference type="Gene3D" id="3.30.930.10">
    <property type="entry name" value="Bira Bifunctional Protein, Domain 2"/>
    <property type="match status" value="1"/>
</dbReference>
<dbReference type="Gene3D" id="1.10.10.10">
    <property type="entry name" value="Winged helix-like DNA-binding domain superfamily/Winged helix DNA-binding domain"/>
    <property type="match status" value="1"/>
</dbReference>
<dbReference type="HAMAP" id="MF_00282">
    <property type="entry name" value="Phe_tRNA_synth_alpha2"/>
    <property type="match status" value="1"/>
</dbReference>
<dbReference type="InterPro" id="IPR006195">
    <property type="entry name" value="aa-tRNA-synth_II"/>
</dbReference>
<dbReference type="InterPro" id="IPR045864">
    <property type="entry name" value="aa-tRNA-synth_II/BPL/LPL"/>
</dbReference>
<dbReference type="InterPro" id="IPR004529">
    <property type="entry name" value="Phe-tRNA-synth_IIc_asu"/>
</dbReference>
<dbReference type="InterPro" id="IPR022917">
    <property type="entry name" value="Phe_tRNA_ligase_alpha_bac/arc"/>
</dbReference>
<dbReference type="InterPro" id="IPR002319">
    <property type="entry name" value="Phenylalanyl-tRNA_Synthase"/>
</dbReference>
<dbReference type="InterPro" id="IPR002831">
    <property type="entry name" value="Tscrpt_reg_TrmB_N"/>
</dbReference>
<dbReference type="InterPro" id="IPR036388">
    <property type="entry name" value="WH-like_DNA-bd_sf"/>
</dbReference>
<dbReference type="InterPro" id="IPR036390">
    <property type="entry name" value="WH_DNA-bd_sf"/>
</dbReference>
<dbReference type="NCBIfam" id="TIGR00468">
    <property type="entry name" value="pheS"/>
    <property type="match status" value="1"/>
</dbReference>
<dbReference type="NCBIfam" id="NF003210">
    <property type="entry name" value="PRK04172.1"/>
    <property type="match status" value="1"/>
</dbReference>
<dbReference type="PANTHER" id="PTHR11538:SF40">
    <property type="entry name" value="PHENYLALANINE--TRNA LIGASE ALPHA SUBUNIT"/>
    <property type="match status" value="1"/>
</dbReference>
<dbReference type="PANTHER" id="PTHR11538">
    <property type="entry name" value="PHENYLALANYL-TRNA SYNTHETASE"/>
    <property type="match status" value="1"/>
</dbReference>
<dbReference type="Pfam" id="PF01978">
    <property type="entry name" value="TrmB"/>
    <property type="match status" value="1"/>
</dbReference>
<dbReference type="Pfam" id="PF01409">
    <property type="entry name" value="tRNA-synt_2d"/>
    <property type="match status" value="1"/>
</dbReference>
<dbReference type="SUPFAM" id="SSF55681">
    <property type="entry name" value="Class II aaRS and biotin synthetases"/>
    <property type="match status" value="1"/>
</dbReference>
<dbReference type="SUPFAM" id="SSF46785">
    <property type="entry name" value="Winged helix' DNA-binding domain"/>
    <property type="match status" value="1"/>
</dbReference>
<dbReference type="PROSITE" id="PS50862">
    <property type="entry name" value="AA_TRNA_LIGASE_II"/>
    <property type="match status" value="1"/>
</dbReference>
<protein>
    <recommendedName>
        <fullName evidence="1">Phenylalanine--tRNA ligase alpha subunit</fullName>
        <ecNumber evidence="1">6.1.1.20</ecNumber>
    </recommendedName>
    <alternativeName>
        <fullName evidence="1">Phenylalanyl-tRNA synthetase alpha subunit</fullName>
        <shortName evidence="1">PheRS</shortName>
    </alternativeName>
</protein>